<keyword id="KW-0030">Aminoacyl-tRNA synthetase</keyword>
<keyword id="KW-0067">ATP-binding</keyword>
<keyword id="KW-0963">Cytoplasm</keyword>
<keyword id="KW-0436">Ligase</keyword>
<keyword id="KW-0547">Nucleotide-binding</keyword>
<keyword id="KW-0648">Protein biosynthesis</keyword>
<keyword id="KW-1185">Reference proteome</keyword>
<comment type="catalytic activity">
    <reaction>
        <text>tRNA(Gly) + glycine + ATP = glycyl-tRNA(Gly) + AMP + diphosphate</text>
        <dbReference type="Rhea" id="RHEA:16013"/>
        <dbReference type="Rhea" id="RHEA-COMP:9664"/>
        <dbReference type="Rhea" id="RHEA-COMP:9683"/>
        <dbReference type="ChEBI" id="CHEBI:30616"/>
        <dbReference type="ChEBI" id="CHEBI:33019"/>
        <dbReference type="ChEBI" id="CHEBI:57305"/>
        <dbReference type="ChEBI" id="CHEBI:78442"/>
        <dbReference type="ChEBI" id="CHEBI:78522"/>
        <dbReference type="ChEBI" id="CHEBI:456215"/>
        <dbReference type="EC" id="6.1.1.14"/>
    </reaction>
</comment>
<comment type="subunit">
    <text evidence="1">Tetramer of two alpha and two beta subunits.</text>
</comment>
<comment type="subcellular location">
    <subcellularLocation>
        <location evidence="1">Cytoplasm</location>
    </subcellularLocation>
</comment>
<comment type="similarity">
    <text evidence="2">Belongs to the class-II aminoacyl-tRNA synthetase family.</text>
</comment>
<name>SYGA_RICPR</name>
<proteinExistence type="inferred from homology"/>
<gene>
    <name type="primary">glyQ</name>
    <name type="ordered locus">RP850</name>
</gene>
<evidence type="ECO:0000250" key="1"/>
<evidence type="ECO:0000305" key="2"/>
<protein>
    <recommendedName>
        <fullName>Glycine--tRNA ligase alpha subunit</fullName>
        <ecNumber>6.1.1.14</ecNumber>
    </recommendedName>
    <alternativeName>
        <fullName>Glycyl-tRNA synthetase alpha subunit</fullName>
        <shortName>GlyRS</shortName>
    </alternativeName>
</protein>
<dbReference type="EC" id="6.1.1.14"/>
<dbReference type="EMBL" id="AJ235273">
    <property type="protein sequence ID" value="CAA15274.1"/>
    <property type="molecule type" value="Genomic_DNA"/>
</dbReference>
<dbReference type="PIR" id="B71647">
    <property type="entry name" value="B71647"/>
</dbReference>
<dbReference type="RefSeq" id="NP_221198.1">
    <property type="nucleotide sequence ID" value="NC_000963.1"/>
</dbReference>
<dbReference type="RefSeq" id="WP_004596781.1">
    <property type="nucleotide sequence ID" value="NC_000963.1"/>
</dbReference>
<dbReference type="SMR" id="Q9ZCB0"/>
<dbReference type="STRING" id="272947.gene:17555919"/>
<dbReference type="EnsemblBacteria" id="CAA15274">
    <property type="protein sequence ID" value="CAA15274"/>
    <property type="gene ID" value="CAA15274"/>
</dbReference>
<dbReference type="KEGG" id="rpr:RP850"/>
<dbReference type="PATRIC" id="fig|272947.5.peg.888"/>
<dbReference type="eggNOG" id="COG0752">
    <property type="taxonomic scope" value="Bacteria"/>
</dbReference>
<dbReference type="HOGENOM" id="CLU_057066_1_0_5"/>
<dbReference type="OrthoDB" id="9802183at2"/>
<dbReference type="Proteomes" id="UP000002480">
    <property type="component" value="Chromosome"/>
</dbReference>
<dbReference type="GO" id="GO:0005829">
    <property type="term" value="C:cytosol"/>
    <property type="evidence" value="ECO:0007669"/>
    <property type="project" value="TreeGrafter"/>
</dbReference>
<dbReference type="GO" id="GO:0005524">
    <property type="term" value="F:ATP binding"/>
    <property type="evidence" value="ECO:0007669"/>
    <property type="project" value="UniProtKB-UniRule"/>
</dbReference>
<dbReference type="GO" id="GO:0004820">
    <property type="term" value="F:glycine-tRNA ligase activity"/>
    <property type="evidence" value="ECO:0007669"/>
    <property type="project" value="UniProtKB-UniRule"/>
</dbReference>
<dbReference type="GO" id="GO:0006426">
    <property type="term" value="P:glycyl-tRNA aminoacylation"/>
    <property type="evidence" value="ECO:0007669"/>
    <property type="project" value="UniProtKB-UniRule"/>
</dbReference>
<dbReference type="FunFam" id="3.30.930.10:FF:000006">
    <property type="entry name" value="Glycine--tRNA ligase alpha subunit"/>
    <property type="match status" value="1"/>
</dbReference>
<dbReference type="Gene3D" id="3.30.930.10">
    <property type="entry name" value="Bira Bifunctional Protein, Domain 2"/>
    <property type="match status" value="1"/>
</dbReference>
<dbReference type="Gene3D" id="1.20.58.180">
    <property type="entry name" value="Class II aaRS and biotin synthetases, domain 2"/>
    <property type="match status" value="1"/>
</dbReference>
<dbReference type="HAMAP" id="MF_00254">
    <property type="entry name" value="Gly_tRNA_synth_alpha"/>
    <property type="match status" value="1"/>
</dbReference>
<dbReference type="InterPro" id="IPR045864">
    <property type="entry name" value="aa-tRNA-synth_II/BPL/LPL"/>
</dbReference>
<dbReference type="InterPro" id="IPR006194">
    <property type="entry name" value="Gly-tRNA-synth_heterodimer"/>
</dbReference>
<dbReference type="InterPro" id="IPR002310">
    <property type="entry name" value="Gly-tRNA_ligase_asu"/>
</dbReference>
<dbReference type="NCBIfam" id="TIGR00388">
    <property type="entry name" value="glyQ"/>
    <property type="match status" value="1"/>
</dbReference>
<dbReference type="NCBIfam" id="NF006827">
    <property type="entry name" value="PRK09348.1"/>
    <property type="match status" value="1"/>
</dbReference>
<dbReference type="PANTHER" id="PTHR30075:SF2">
    <property type="entry name" value="GLYCINE--TRNA LIGASE, CHLOROPLASTIC_MITOCHONDRIAL 2"/>
    <property type="match status" value="1"/>
</dbReference>
<dbReference type="PANTHER" id="PTHR30075">
    <property type="entry name" value="GLYCYL-TRNA SYNTHETASE"/>
    <property type="match status" value="1"/>
</dbReference>
<dbReference type="Pfam" id="PF02091">
    <property type="entry name" value="tRNA-synt_2e"/>
    <property type="match status" value="1"/>
</dbReference>
<dbReference type="PRINTS" id="PR01044">
    <property type="entry name" value="TRNASYNTHGA"/>
</dbReference>
<dbReference type="SUPFAM" id="SSF55681">
    <property type="entry name" value="Class II aaRS and biotin synthetases"/>
    <property type="match status" value="1"/>
</dbReference>
<dbReference type="PROSITE" id="PS50861">
    <property type="entry name" value="AA_TRNA_LIGASE_II_GLYAB"/>
    <property type="match status" value="1"/>
</dbReference>
<organism>
    <name type="scientific">Rickettsia prowazekii (strain Madrid E)</name>
    <dbReference type="NCBI Taxonomy" id="272947"/>
    <lineage>
        <taxon>Bacteria</taxon>
        <taxon>Pseudomonadati</taxon>
        <taxon>Pseudomonadota</taxon>
        <taxon>Alphaproteobacteria</taxon>
        <taxon>Rickettsiales</taxon>
        <taxon>Rickettsiaceae</taxon>
        <taxon>Rickettsieae</taxon>
        <taxon>Rickettsia</taxon>
        <taxon>typhus group</taxon>
    </lineage>
</organism>
<sequence>MKKLSFQQIILILQNYWQDYGCAILQPYDAHVGAGTFHPATVLRCLGDKPWFIAYVQPSRRPGDSRYGMHPNRMQHYYQFQVILKPSPDNIQDLYLKSLESLDLDLKTHDIRFVEDDWESPTLGASGLGWEIWCDGMEVSQFTYMQQIGGIECYPVACEITYGLERLALYIQGIDEVKELDWNGQIGEKALKYGEVDFEAERQFSKYNLEFADSEMLLRRFKDSVEQCERLVKVNLPMPAYDECLKASHYFNQLNALGVISVTERASYVLRVRDLARICCIKWLELSSE</sequence>
<accession>Q9ZCB0</accession>
<reference key="1">
    <citation type="journal article" date="1998" name="Nature">
        <title>The genome sequence of Rickettsia prowazekii and the origin of mitochondria.</title>
        <authorList>
            <person name="Andersson S.G.E."/>
            <person name="Zomorodipour A."/>
            <person name="Andersson J.O."/>
            <person name="Sicheritz-Ponten T."/>
            <person name="Alsmark U.C.M."/>
            <person name="Podowski R.M."/>
            <person name="Naeslund A.K."/>
            <person name="Eriksson A.-S."/>
            <person name="Winkler H.H."/>
            <person name="Kurland C.G."/>
        </authorList>
    </citation>
    <scope>NUCLEOTIDE SEQUENCE [LARGE SCALE GENOMIC DNA]</scope>
    <source>
        <strain>Madrid E</strain>
    </source>
</reference>
<feature type="chain" id="PRO_0000072861" description="Glycine--tRNA ligase alpha subunit">
    <location>
        <begin position="1"/>
        <end position="289"/>
    </location>
</feature>